<organism>
    <name type="scientific">Neurospora crassa (strain ATCC 24698 / 74-OR23-1A / CBS 708.71 / DSM 1257 / FGSC 987)</name>
    <dbReference type="NCBI Taxonomy" id="367110"/>
    <lineage>
        <taxon>Eukaryota</taxon>
        <taxon>Fungi</taxon>
        <taxon>Dikarya</taxon>
        <taxon>Ascomycota</taxon>
        <taxon>Pezizomycotina</taxon>
        <taxon>Sordariomycetes</taxon>
        <taxon>Sordariomycetidae</taxon>
        <taxon>Sordariales</taxon>
        <taxon>Sordariaceae</taxon>
        <taxon>Neurospora</taxon>
    </lineage>
</organism>
<name>NDUA8_NEUCR</name>
<proteinExistence type="evidence at protein level"/>
<comment type="function">
    <text>Accessory subunit of the mitochondrial membrane respiratory chain NADH dehydrogenase (Complex I), that is believed not to be involved in catalysis. Complex I functions in the transfer of electrons from NADH to the respiratory chain. The immediate electron acceptor for the enzyme is believed to be ubiquinone.</text>
</comment>
<comment type="cofactor">
    <cofactor evidence="3">
        <name>iron-sulfur cluster</name>
        <dbReference type="ChEBI" id="CHEBI:30408"/>
    </cofactor>
    <text evidence="3">Binds 1 iron-sulfur cluster.</text>
</comment>
<comment type="subunit">
    <text>Complex I is composed of about 40 different subunits. This is a component of the hydrophobic fraction.</text>
</comment>
<comment type="subcellular location">
    <subcellularLocation>
        <location>Mitochondrion inner membrane</location>
    </subcellularLocation>
</comment>
<comment type="similarity">
    <text evidence="3">Belongs to the complex I NDUFA8 subunit family.</text>
</comment>
<dbReference type="EMBL" id="M55323">
    <property type="protein sequence ID" value="AAA33571.1"/>
    <property type="molecule type" value="mRNA"/>
</dbReference>
<dbReference type="EMBL" id="BX842631">
    <property type="protein sequence ID" value="CAE76413.1"/>
    <property type="molecule type" value="Genomic_DNA"/>
</dbReference>
<dbReference type="EMBL" id="CM002236">
    <property type="protein sequence ID" value="EAA35830.1"/>
    <property type="molecule type" value="Genomic_DNA"/>
</dbReference>
<dbReference type="PIR" id="A36621">
    <property type="entry name" value="A36621"/>
</dbReference>
<dbReference type="PIR" id="T47251">
    <property type="entry name" value="T47251"/>
</dbReference>
<dbReference type="SMR" id="P21976"/>
<dbReference type="STRING" id="367110.P21976"/>
<dbReference type="TCDB" id="3.D.1.6.2">
    <property type="family name" value="the h+ or na+-translocating nadh dehydrogenase (ndh) family"/>
</dbReference>
<dbReference type="PaxDb" id="5141-EFNCRP00000001979"/>
<dbReference type="EnsemblFungi" id="EAA35830">
    <property type="protein sequence ID" value="EAA35830"/>
    <property type="gene ID" value="NCU02472"/>
</dbReference>
<dbReference type="KEGG" id="ncr:NCU02472"/>
<dbReference type="VEuPathDB" id="FungiDB:NCU02472"/>
<dbReference type="HOGENOM" id="CLU_081931_1_0_1"/>
<dbReference type="InParanoid" id="P21976"/>
<dbReference type="OrthoDB" id="276296at2759"/>
<dbReference type="Proteomes" id="UP000001805">
    <property type="component" value="Chromosome 1, Linkage Group I"/>
</dbReference>
<dbReference type="GO" id="GO:0005743">
    <property type="term" value="C:mitochondrial inner membrane"/>
    <property type="evidence" value="ECO:0007669"/>
    <property type="project" value="UniProtKB-SubCell"/>
</dbReference>
<dbReference type="GO" id="GO:0045271">
    <property type="term" value="C:respiratory chain complex I"/>
    <property type="evidence" value="ECO:0000318"/>
    <property type="project" value="GO_Central"/>
</dbReference>
<dbReference type="GO" id="GO:0006120">
    <property type="term" value="P:mitochondrial electron transport, NADH to ubiquinone"/>
    <property type="evidence" value="ECO:0007669"/>
    <property type="project" value="InterPro"/>
</dbReference>
<dbReference type="InterPro" id="IPR010625">
    <property type="entry name" value="CHCH"/>
</dbReference>
<dbReference type="InterPro" id="IPR016680">
    <property type="entry name" value="NDUFA8"/>
</dbReference>
<dbReference type="PANTHER" id="PTHR13344:SF0">
    <property type="entry name" value="NADH DEHYDROGENASE [UBIQUINONE] 1 ALPHA SUBCOMPLEX SUBUNIT 8"/>
    <property type="match status" value="1"/>
</dbReference>
<dbReference type="PANTHER" id="PTHR13344">
    <property type="entry name" value="NADH-UBIQUINONE OXIDOREDUCTASE"/>
    <property type="match status" value="1"/>
</dbReference>
<dbReference type="Pfam" id="PF06747">
    <property type="entry name" value="CHCH"/>
    <property type="match status" value="1"/>
</dbReference>
<dbReference type="PIRSF" id="PIRSF017016">
    <property type="entry name" value="NDUA8"/>
    <property type="match status" value="1"/>
</dbReference>
<dbReference type="PROSITE" id="PS51808">
    <property type="entry name" value="CHCH"/>
    <property type="match status" value="2"/>
</dbReference>
<gene>
    <name type="ORF">B1O14.280</name>
    <name type="ORF">NCU02472</name>
</gene>
<sequence>MASRIPQFNQQVLYDTTPLPDSIPKVKELGASSAPLMSAAYFIGARCRDYNDDFMQCKNENPGKGEFECLKEGRRVTRCARSVIADINKSCLEEFRKHWTCLEDNNQQLWQCRPAEWKLNKCVFENLGLKKEIPDQPPNVTPVHLRKQMIYAHWPIPRSAEPFVPPTQTGDNNKAPAAASSSS</sequence>
<reference key="1">
    <citation type="journal article" date="1990" name="J. Biol. Chem.">
        <title>Molecular cloning of subunits of complex I from Neurospora crassa. Primary structure and in vitro expression of a 22-kDa polypeptide.</title>
        <authorList>
            <person name="Videira A."/>
            <person name="Tropschug M."/>
            <person name="Wachter E."/>
            <person name="Schneider H."/>
            <person name="Werner S."/>
        </authorList>
    </citation>
    <scope>NUCLEOTIDE SEQUENCE [MRNA]</scope>
    <scope>PROTEIN SEQUENCE OF 38-45</scope>
</reference>
<reference key="2">
    <citation type="journal article" date="2003" name="Nucleic Acids Res.">
        <title>What's in the genome of a filamentous fungus? Analysis of the Neurospora genome sequence.</title>
        <authorList>
            <person name="Mannhaupt G."/>
            <person name="Montrone C."/>
            <person name="Haase D."/>
            <person name="Mewes H.-W."/>
            <person name="Aign V."/>
            <person name="Hoheisel J.D."/>
            <person name="Fartmann B."/>
            <person name="Nyakatura G."/>
            <person name="Kempken F."/>
            <person name="Maier J."/>
            <person name="Schulte U."/>
        </authorList>
    </citation>
    <scope>NUCLEOTIDE SEQUENCE [LARGE SCALE GENOMIC DNA]</scope>
    <source>
        <strain>ATCC 24698 / 74-OR23-1A / CBS 708.71 / DSM 1257 / FGSC 987</strain>
    </source>
</reference>
<reference key="3">
    <citation type="journal article" date="2003" name="Nature">
        <title>The genome sequence of the filamentous fungus Neurospora crassa.</title>
        <authorList>
            <person name="Galagan J.E."/>
            <person name="Calvo S.E."/>
            <person name="Borkovich K.A."/>
            <person name="Selker E.U."/>
            <person name="Read N.D."/>
            <person name="Jaffe D.B."/>
            <person name="FitzHugh W."/>
            <person name="Ma L.-J."/>
            <person name="Smirnov S."/>
            <person name="Purcell S."/>
            <person name="Rehman B."/>
            <person name="Elkins T."/>
            <person name="Engels R."/>
            <person name="Wang S."/>
            <person name="Nielsen C.B."/>
            <person name="Butler J."/>
            <person name="Endrizzi M."/>
            <person name="Qui D."/>
            <person name="Ianakiev P."/>
            <person name="Bell-Pedersen D."/>
            <person name="Nelson M.A."/>
            <person name="Werner-Washburne M."/>
            <person name="Selitrennikoff C.P."/>
            <person name="Kinsey J.A."/>
            <person name="Braun E.L."/>
            <person name="Zelter A."/>
            <person name="Schulte U."/>
            <person name="Kothe G.O."/>
            <person name="Jedd G."/>
            <person name="Mewes H.-W."/>
            <person name="Staben C."/>
            <person name="Marcotte E."/>
            <person name="Greenberg D."/>
            <person name="Roy A."/>
            <person name="Foley K."/>
            <person name="Naylor J."/>
            <person name="Stange-Thomann N."/>
            <person name="Barrett R."/>
            <person name="Gnerre S."/>
            <person name="Kamal M."/>
            <person name="Kamvysselis M."/>
            <person name="Mauceli E.W."/>
            <person name="Bielke C."/>
            <person name="Rudd S."/>
            <person name="Frishman D."/>
            <person name="Krystofova S."/>
            <person name="Rasmussen C."/>
            <person name="Metzenberg R.L."/>
            <person name="Perkins D.D."/>
            <person name="Kroken S."/>
            <person name="Cogoni C."/>
            <person name="Macino G."/>
            <person name="Catcheside D.E.A."/>
            <person name="Li W."/>
            <person name="Pratt R.J."/>
            <person name="Osmani S.A."/>
            <person name="DeSouza C.P.C."/>
            <person name="Glass N.L."/>
            <person name="Orbach M.J."/>
            <person name="Berglund J.A."/>
            <person name="Voelker R."/>
            <person name="Yarden O."/>
            <person name="Plamann M."/>
            <person name="Seiler S."/>
            <person name="Dunlap J.C."/>
            <person name="Radford A."/>
            <person name="Aramayo R."/>
            <person name="Natvig D.O."/>
            <person name="Alex L.A."/>
            <person name="Mannhaupt G."/>
            <person name="Ebbole D.J."/>
            <person name="Freitag M."/>
            <person name="Paulsen I."/>
            <person name="Sachs M.S."/>
            <person name="Lander E.S."/>
            <person name="Nusbaum C."/>
            <person name="Birren B.W."/>
        </authorList>
    </citation>
    <scope>NUCLEOTIDE SEQUENCE [LARGE SCALE GENOMIC DNA]</scope>
    <source>
        <strain>ATCC 24698 / 74-OR23-1A / CBS 708.71 / DSM 1257 / FGSC 987</strain>
    </source>
</reference>
<keyword id="KW-0903">Direct protein sequencing</keyword>
<keyword id="KW-1015">Disulfide bond</keyword>
<keyword id="KW-0249">Electron transport</keyword>
<keyword id="KW-0472">Membrane</keyword>
<keyword id="KW-0496">Mitochondrion</keyword>
<keyword id="KW-0999">Mitochondrion inner membrane</keyword>
<keyword id="KW-1185">Reference proteome</keyword>
<keyword id="KW-0677">Repeat</keyword>
<keyword id="KW-0679">Respiratory chain</keyword>
<keyword id="KW-0813">Transport</keyword>
<protein>
    <recommendedName>
        <fullName>NADH-ubiquinone oxidoreductase 20.8 kDa subunit</fullName>
    </recommendedName>
</protein>
<evidence type="ECO:0000255" key="1">
    <source>
        <dbReference type="PROSITE-ProRule" id="PRU01150"/>
    </source>
</evidence>
<evidence type="ECO:0000256" key="2">
    <source>
        <dbReference type="SAM" id="MobiDB-lite"/>
    </source>
</evidence>
<evidence type="ECO:0000305" key="3"/>
<feature type="chain" id="PRO_0000118736" description="NADH-ubiquinone oxidoreductase 20.8 kDa subunit">
    <location>
        <begin position="1"/>
        <end position="183"/>
    </location>
</feature>
<feature type="domain" description="CHCH 1" evidence="1">
    <location>
        <begin position="44"/>
        <end position="87"/>
    </location>
</feature>
<feature type="domain" description="CHCH 2" evidence="1">
    <location>
        <begin position="88"/>
        <end position="130"/>
    </location>
</feature>
<feature type="region of interest" description="Disordered" evidence="2">
    <location>
        <begin position="161"/>
        <end position="183"/>
    </location>
</feature>
<feature type="short sequence motif" description="Cx9C motif 1" evidence="1">
    <location>
        <begin position="47"/>
        <end position="57"/>
    </location>
</feature>
<feature type="short sequence motif" description="Cx9C motif 2" evidence="1">
    <location>
        <begin position="69"/>
        <end position="79"/>
    </location>
</feature>
<feature type="short sequence motif" description="Cx9C motif 3" evidence="1">
    <location>
        <begin position="91"/>
        <end position="101"/>
    </location>
</feature>
<feature type="short sequence motif" description="Cx9C motif 4" evidence="1">
    <location>
        <begin position="112"/>
        <end position="122"/>
    </location>
</feature>
<feature type="disulfide bond" evidence="1">
    <location>
        <begin position="47"/>
        <end position="79"/>
    </location>
</feature>
<feature type="disulfide bond" evidence="1">
    <location>
        <begin position="57"/>
        <end position="69"/>
    </location>
</feature>
<feature type="disulfide bond" evidence="1">
    <location>
        <begin position="91"/>
        <end position="122"/>
    </location>
</feature>
<feature type="disulfide bond" evidence="1">
    <location>
        <begin position="101"/>
        <end position="112"/>
    </location>
</feature>
<feature type="sequence conflict" description="In Ref. 1; AAA33571." evidence="3" ref="1">
    <original>P</original>
    <variation>R</variation>
    <location>
        <position position="20"/>
    </location>
</feature>
<feature type="sequence conflict" description="In Ref. 1; AAA33571." evidence="3" ref="1">
    <original>V</original>
    <variation>L</variation>
    <location>
        <position position="76"/>
    </location>
</feature>
<feature type="sequence conflict" description="In Ref. 1; AAA33571." evidence="3" ref="1">
    <original>A</original>
    <variation>R</variation>
    <location>
        <position position="177"/>
    </location>
</feature>
<accession>P21976</accession>
<accession>Q7RVL8</accession>